<keyword id="KW-0256">Endoplasmic reticulum</keyword>
<keyword id="KW-0472">Membrane</keyword>
<keyword id="KW-1185">Reference proteome</keyword>
<keyword id="KW-0812">Transmembrane</keyword>
<keyword id="KW-1133">Transmembrane helix</keyword>
<name>RTNLL_ARATH</name>
<sequence length="203" mass="23053">MSSSSDKLFNRDRTIHEILGGGIVADVMLWRKKNVSVGIVTVTIASWMVFEAFAYTIFTLISSVLLLLLSILFLWSKSASILNRPSPPLPEFQISEAMAEEASIWLRIHVNKLLQVSHDIAMARDSELYTKVAVSLFLLSLIGSLMDFQTLCHTSVLVVMTVPAFYERYEDYIVGSIEFICNKTRELYLRLEIWANPENKKLS</sequence>
<dbReference type="EMBL" id="AL132957">
    <property type="protein sequence ID" value="CAB70986.1"/>
    <property type="molecule type" value="Genomic_DNA"/>
</dbReference>
<dbReference type="EMBL" id="CP002686">
    <property type="protein sequence ID" value="AEE79190.1"/>
    <property type="molecule type" value="Genomic_DNA"/>
</dbReference>
<dbReference type="EMBL" id="BT010698">
    <property type="protein sequence ID" value="AAR20755.1"/>
    <property type="molecule type" value="mRNA"/>
</dbReference>
<dbReference type="EMBL" id="BT010978">
    <property type="protein sequence ID" value="AAR24756.1"/>
    <property type="molecule type" value="mRNA"/>
</dbReference>
<dbReference type="EMBL" id="AK229371">
    <property type="protein sequence ID" value="BAF01234.1"/>
    <property type="molecule type" value="mRNA"/>
</dbReference>
<dbReference type="PIR" id="T47571">
    <property type="entry name" value="T47571"/>
</dbReference>
<dbReference type="RefSeq" id="NP_190980.1">
    <property type="nucleotide sequence ID" value="NM_115272.3"/>
</dbReference>
<dbReference type="SMR" id="Q9M392"/>
<dbReference type="BioGRID" id="9896">
    <property type="interactions" value="15"/>
</dbReference>
<dbReference type="FunCoup" id="Q9M392">
    <property type="interactions" value="243"/>
</dbReference>
<dbReference type="IntAct" id="Q9M392">
    <property type="interactions" value="17"/>
</dbReference>
<dbReference type="STRING" id="3702.Q9M392"/>
<dbReference type="PaxDb" id="3702-AT3G54120.1"/>
<dbReference type="ProteomicsDB" id="226701"/>
<dbReference type="EnsemblPlants" id="AT3G54120.1">
    <property type="protein sequence ID" value="AT3G54120.1"/>
    <property type="gene ID" value="AT3G54120"/>
</dbReference>
<dbReference type="GeneID" id="824579"/>
<dbReference type="Gramene" id="AT3G54120.1">
    <property type="protein sequence ID" value="AT3G54120.1"/>
    <property type="gene ID" value="AT3G54120"/>
</dbReference>
<dbReference type="KEGG" id="ath:AT3G54120"/>
<dbReference type="Araport" id="AT3G54120"/>
<dbReference type="TAIR" id="AT3G54120"/>
<dbReference type="eggNOG" id="KOG1792">
    <property type="taxonomic scope" value="Eukaryota"/>
</dbReference>
<dbReference type="HOGENOM" id="CLU_066344_2_0_1"/>
<dbReference type="InParanoid" id="Q9M392"/>
<dbReference type="OMA" id="VMWRRGD"/>
<dbReference type="PhylomeDB" id="Q9M392"/>
<dbReference type="PRO" id="PR:Q9M392"/>
<dbReference type="Proteomes" id="UP000006548">
    <property type="component" value="Chromosome 3"/>
</dbReference>
<dbReference type="ExpressionAtlas" id="Q9M392">
    <property type="expression patterns" value="baseline and differential"/>
</dbReference>
<dbReference type="GO" id="GO:0005789">
    <property type="term" value="C:endoplasmic reticulum membrane"/>
    <property type="evidence" value="ECO:0007669"/>
    <property type="project" value="UniProtKB-SubCell"/>
</dbReference>
<dbReference type="GO" id="GO:0009617">
    <property type="term" value="P:response to bacterium"/>
    <property type="evidence" value="ECO:0007669"/>
    <property type="project" value="InterPro"/>
</dbReference>
<dbReference type="InterPro" id="IPR003388">
    <property type="entry name" value="Reticulon"/>
</dbReference>
<dbReference type="InterPro" id="IPR045064">
    <property type="entry name" value="Reticulon-like"/>
</dbReference>
<dbReference type="PANTHER" id="PTHR10994">
    <property type="entry name" value="RETICULON"/>
    <property type="match status" value="1"/>
</dbReference>
<dbReference type="PANTHER" id="PTHR10994:SF65">
    <property type="entry name" value="RETICULON-LIKE PROTEIN B12"/>
    <property type="match status" value="1"/>
</dbReference>
<dbReference type="Pfam" id="PF02453">
    <property type="entry name" value="Reticulon"/>
    <property type="match status" value="1"/>
</dbReference>
<dbReference type="PROSITE" id="PS50845">
    <property type="entry name" value="RETICULON"/>
    <property type="match status" value="1"/>
</dbReference>
<accession>Q9M392</accession>
<feature type="chain" id="PRO_0000371293" description="Reticulon-like protein B12">
    <location>
        <begin position="1"/>
        <end position="203"/>
    </location>
</feature>
<feature type="transmembrane region" description="Helical" evidence="2">
    <location>
        <begin position="34"/>
        <end position="54"/>
    </location>
</feature>
<feature type="transmembrane region" description="Helical" evidence="2">
    <location>
        <begin position="55"/>
        <end position="75"/>
    </location>
</feature>
<feature type="transmembrane region" description="Helical" evidence="2">
    <location>
        <begin position="132"/>
        <end position="152"/>
    </location>
</feature>
<feature type="domain" description="Reticulon" evidence="3">
    <location>
        <begin position="24"/>
        <end position="203"/>
    </location>
</feature>
<comment type="subcellular location">
    <subcellularLocation>
        <location evidence="1">Endoplasmic reticulum membrane</location>
        <topology evidence="2">Multi-pass membrane protein</topology>
    </subcellularLocation>
</comment>
<reference key="1">
    <citation type="journal article" date="2000" name="Nature">
        <title>Sequence and analysis of chromosome 3 of the plant Arabidopsis thaliana.</title>
        <authorList>
            <person name="Salanoubat M."/>
            <person name="Lemcke K."/>
            <person name="Rieger M."/>
            <person name="Ansorge W."/>
            <person name="Unseld M."/>
            <person name="Fartmann B."/>
            <person name="Valle G."/>
            <person name="Bloecker H."/>
            <person name="Perez-Alonso M."/>
            <person name="Obermaier B."/>
            <person name="Delseny M."/>
            <person name="Boutry M."/>
            <person name="Grivell L.A."/>
            <person name="Mache R."/>
            <person name="Puigdomenech P."/>
            <person name="De Simone V."/>
            <person name="Choisne N."/>
            <person name="Artiguenave F."/>
            <person name="Robert C."/>
            <person name="Brottier P."/>
            <person name="Wincker P."/>
            <person name="Cattolico L."/>
            <person name="Weissenbach J."/>
            <person name="Saurin W."/>
            <person name="Quetier F."/>
            <person name="Schaefer M."/>
            <person name="Mueller-Auer S."/>
            <person name="Gabel C."/>
            <person name="Fuchs M."/>
            <person name="Benes V."/>
            <person name="Wurmbach E."/>
            <person name="Drzonek H."/>
            <person name="Erfle H."/>
            <person name="Jordan N."/>
            <person name="Bangert S."/>
            <person name="Wiedelmann R."/>
            <person name="Kranz H."/>
            <person name="Voss H."/>
            <person name="Holland R."/>
            <person name="Brandt P."/>
            <person name="Nyakatura G."/>
            <person name="Vezzi A."/>
            <person name="D'Angelo M."/>
            <person name="Pallavicini A."/>
            <person name="Toppo S."/>
            <person name="Simionati B."/>
            <person name="Conrad A."/>
            <person name="Hornischer K."/>
            <person name="Kauer G."/>
            <person name="Loehnert T.-H."/>
            <person name="Nordsiek G."/>
            <person name="Reichelt J."/>
            <person name="Scharfe M."/>
            <person name="Schoen O."/>
            <person name="Bargues M."/>
            <person name="Terol J."/>
            <person name="Climent J."/>
            <person name="Navarro P."/>
            <person name="Collado C."/>
            <person name="Perez-Perez A."/>
            <person name="Ottenwaelder B."/>
            <person name="Duchemin D."/>
            <person name="Cooke R."/>
            <person name="Laudie M."/>
            <person name="Berger-Llauro C."/>
            <person name="Purnelle B."/>
            <person name="Masuy D."/>
            <person name="de Haan M."/>
            <person name="Maarse A.C."/>
            <person name="Alcaraz J.-P."/>
            <person name="Cottet A."/>
            <person name="Casacuberta E."/>
            <person name="Monfort A."/>
            <person name="Argiriou A."/>
            <person name="Flores M."/>
            <person name="Liguori R."/>
            <person name="Vitale D."/>
            <person name="Mannhaupt G."/>
            <person name="Haase D."/>
            <person name="Schoof H."/>
            <person name="Rudd S."/>
            <person name="Zaccaria P."/>
            <person name="Mewes H.-W."/>
            <person name="Mayer K.F.X."/>
            <person name="Kaul S."/>
            <person name="Town C.D."/>
            <person name="Koo H.L."/>
            <person name="Tallon L.J."/>
            <person name="Jenkins J."/>
            <person name="Rooney T."/>
            <person name="Rizzo M."/>
            <person name="Walts A."/>
            <person name="Utterback T."/>
            <person name="Fujii C.Y."/>
            <person name="Shea T.P."/>
            <person name="Creasy T.H."/>
            <person name="Haas B."/>
            <person name="Maiti R."/>
            <person name="Wu D."/>
            <person name="Peterson J."/>
            <person name="Van Aken S."/>
            <person name="Pai G."/>
            <person name="Militscher J."/>
            <person name="Sellers P."/>
            <person name="Gill J.E."/>
            <person name="Feldblyum T.V."/>
            <person name="Preuss D."/>
            <person name="Lin X."/>
            <person name="Nierman W.C."/>
            <person name="Salzberg S.L."/>
            <person name="White O."/>
            <person name="Venter J.C."/>
            <person name="Fraser C.M."/>
            <person name="Kaneko T."/>
            <person name="Nakamura Y."/>
            <person name="Sato S."/>
            <person name="Kato T."/>
            <person name="Asamizu E."/>
            <person name="Sasamoto S."/>
            <person name="Kimura T."/>
            <person name="Idesawa K."/>
            <person name="Kawashima K."/>
            <person name="Kishida Y."/>
            <person name="Kiyokawa C."/>
            <person name="Kohara M."/>
            <person name="Matsumoto M."/>
            <person name="Matsuno A."/>
            <person name="Muraki A."/>
            <person name="Nakayama S."/>
            <person name="Nakazaki N."/>
            <person name="Shinpo S."/>
            <person name="Takeuchi C."/>
            <person name="Wada T."/>
            <person name="Watanabe A."/>
            <person name="Yamada M."/>
            <person name="Yasuda M."/>
            <person name="Tabata S."/>
        </authorList>
    </citation>
    <scope>NUCLEOTIDE SEQUENCE [LARGE SCALE GENOMIC DNA]</scope>
    <source>
        <strain>cv. Columbia</strain>
    </source>
</reference>
<reference key="2">
    <citation type="journal article" date="2017" name="Plant J.">
        <title>Araport11: a complete reannotation of the Arabidopsis thaliana reference genome.</title>
        <authorList>
            <person name="Cheng C.Y."/>
            <person name="Krishnakumar V."/>
            <person name="Chan A.P."/>
            <person name="Thibaud-Nissen F."/>
            <person name="Schobel S."/>
            <person name="Town C.D."/>
        </authorList>
    </citation>
    <scope>GENOME REANNOTATION</scope>
    <source>
        <strain>cv. Columbia</strain>
    </source>
</reference>
<reference key="3">
    <citation type="submission" date="2003-12" db="EMBL/GenBank/DDBJ databases">
        <title>Arabidopsis ORF clones.</title>
        <authorList>
            <person name="Shinn P."/>
            <person name="Chen H."/>
            <person name="Cheuk R.F."/>
            <person name="Kim C.J."/>
            <person name="Ecker J.R."/>
        </authorList>
    </citation>
    <scope>NUCLEOTIDE SEQUENCE [LARGE SCALE MRNA]</scope>
    <source>
        <strain>cv. Columbia</strain>
    </source>
</reference>
<reference key="4">
    <citation type="submission" date="2006-07" db="EMBL/GenBank/DDBJ databases">
        <title>Large-scale analysis of RIKEN Arabidopsis full-length (RAFL) cDNAs.</title>
        <authorList>
            <person name="Totoki Y."/>
            <person name="Seki M."/>
            <person name="Ishida J."/>
            <person name="Nakajima M."/>
            <person name="Enju A."/>
            <person name="Kamiya A."/>
            <person name="Narusaka M."/>
            <person name="Shin-i T."/>
            <person name="Nakagawa M."/>
            <person name="Sakamoto N."/>
            <person name="Oishi K."/>
            <person name="Kohara Y."/>
            <person name="Kobayashi M."/>
            <person name="Toyoda A."/>
            <person name="Sakaki Y."/>
            <person name="Sakurai T."/>
            <person name="Iida K."/>
            <person name="Akiyama K."/>
            <person name="Satou M."/>
            <person name="Toyoda T."/>
            <person name="Konagaya A."/>
            <person name="Carninci P."/>
            <person name="Kawai J."/>
            <person name="Hayashizaki Y."/>
            <person name="Shinozaki K."/>
        </authorList>
    </citation>
    <scope>NUCLEOTIDE SEQUENCE [LARGE SCALE MRNA]</scope>
    <source>
        <strain>cv. Columbia</strain>
    </source>
</reference>
<reference key="5">
    <citation type="journal article" date="2007" name="FEBS Lett.">
        <title>Reticulon-like proteins in Arabidopsis thaliana: structural organization and ER localization.</title>
        <authorList>
            <person name="Nziengui H."/>
            <person name="Bouhidel K."/>
            <person name="Pillon D."/>
            <person name="Der C."/>
            <person name="Marty F."/>
            <person name="Schoefs B."/>
        </authorList>
    </citation>
    <scope>GENE FAMILY</scope>
    <scope>NOMENCLATURE</scope>
</reference>
<organism>
    <name type="scientific">Arabidopsis thaliana</name>
    <name type="common">Mouse-ear cress</name>
    <dbReference type="NCBI Taxonomy" id="3702"/>
    <lineage>
        <taxon>Eukaryota</taxon>
        <taxon>Viridiplantae</taxon>
        <taxon>Streptophyta</taxon>
        <taxon>Embryophyta</taxon>
        <taxon>Tracheophyta</taxon>
        <taxon>Spermatophyta</taxon>
        <taxon>Magnoliopsida</taxon>
        <taxon>eudicotyledons</taxon>
        <taxon>Gunneridae</taxon>
        <taxon>Pentapetalae</taxon>
        <taxon>rosids</taxon>
        <taxon>malvids</taxon>
        <taxon>Brassicales</taxon>
        <taxon>Brassicaceae</taxon>
        <taxon>Camelineae</taxon>
        <taxon>Arabidopsis</taxon>
    </lineage>
</organism>
<protein>
    <recommendedName>
        <fullName>Reticulon-like protein B12</fullName>
        <shortName>AtRTNLB12</shortName>
    </recommendedName>
</protein>
<gene>
    <name type="primary">RTNLB12</name>
    <name type="ordered locus">At3g54120</name>
    <name type="ORF">F24B22.80</name>
</gene>
<proteinExistence type="evidence at transcript level"/>
<evidence type="ECO:0000250" key="1">
    <source>
        <dbReference type="UniProtKB" id="Q9SH59"/>
    </source>
</evidence>
<evidence type="ECO:0000255" key="2"/>
<evidence type="ECO:0000255" key="3">
    <source>
        <dbReference type="PROSITE-ProRule" id="PRU00170"/>
    </source>
</evidence>